<reference key="1">
    <citation type="journal article" date="2004" name="Science">
        <title>The complete genome sequence of Propionibacterium acnes, a commensal of human skin.</title>
        <authorList>
            <person name="Brueggemann H."/>
            <person name="Henne A."/>
            <person name="Hoster F."/>
            <person name="Liesegang H."/>
            <person name="Wiezer A."/>
            <person name="Strittmatter A."/>
            <person name="Hujer S."/>
            <person name="Duerre P."/>
            <person name="Gottschalk G."/>
        </authorList>
    </citation>
    <scope>NUCLEOTIDE SEQUENCE [LARGE SCALE GENOMIC DNA]</scope>
    <source>
        <strain>DSM 16379 / KPA171202</strain>
    </source>
</reference>
<evidence type="ECO:0000255" key="1">
    <source>
        <dbReference type="HAMAP-Rule" id="MF_00031"/>
    </source>
</evidence>
<keyword id="KW-0963">Cytoplasm</keyword>
<keyword id="KW-0227">DNA damage</keyword>
<keyword id="KW-0233">DNA recombination</keyword>
<keyword id="KW-0234">DNA repair</keyword>
<keyword id="KW-0238">DNA-binding</keyword>
<protein>
    <recommendedName>
        <fullName evidence="1">Holliday junction branch migration complex subunit RuvA</fullName>
    </recommendedName>
</protein>
<feature type="chain" id="PRO_0000224892" description="Holliday junction branch migration complex subunit RuvA">
    <location>
        <begin position="1"/>
        <end position="201"/>
    </location>
</feature>
<feature type="region of interest" description="Domain I" evidence="1">
    <location>
        <begin position="1"/>
        <end position="63"/>
    </location>
</feature>
<feature type="region of interest" description="Domain II" evidence="1">
    <location>
        <begin position="64"/>
        <end position="142"/>
    </location>
</feature>
<feature type="region of interest" description="Flexible linker" evidence="1">
    <location>
        <begin position="143"/>
        <end position="153"/>
    </location>
</feature>
<feature type="region of interest" description="Domain III" evidence="1">
    <location>
        <begin position="153"/>
        <end position="201"/>
    </location>
</feature>
<proteinExistence type="inferred from homology"/>
<accession>Q6A8K8</accession>
<dbReference type="EMBL" id="AE017283">
    <property type="protein sequence ID" value="AAT82908.1"/>
    <property type="molecule type" value="Genomic_DNA"/>
</dbReference>
<dbReference type="RefSeq" id="WP_002513554.1">
    <property type="nucleotide sequence ID" value="NZ_CP025935.1"/>
</dbReference>
<dbReference type="SMR" id="Q6A8K8"/>
<dbReference type="EnsemblBacteria" id="AAT82908">
    <property type="protein sequence ID" value="AAT82908"/>
    <property type="gene ID" value="PPA1159"/>
</dbReference>
<dbReference type="KEGG" id="pac:PPA1159"/>
<dbReference type="eggNOG" id="COG0632">
    <property type="taxonomic scope" value="Bacteria"/>
</dbReference>
<dbReference type="HOGENOM" id="CLU_087936_2_1_11"/>
<dbReference type="Proteomes" id="UP000000603">
    <property type="component" value="Chromosome"/>
</dbReference>
<dbReference type="GO" id="GO:0005737">
    <property type="term" value="C:cytoplasm"/>
    <property type="evidence" value="ECO:0007669"/>
    <property type="project" value="UniProtKB-SubCell"/>
</dbReference>
<dbReference type="GO" id="GO:0009379">
    <property type="term" value="C:Holliday junction helicase complex"/>
    <property type="evidence" value="ECO:0007669"/>
    <property type="project" value="InterPro"/>
</dbReference>
<dbReference type="GO" id="GO:0048476">
    <property type="term" value="C:Holliday junction resolvase complex"/>
    <property type="evidence" value="ECO:0007669"/>
    <property type="project" value="UniProtKB-UniRule"/>
</dbReference>
<dbReference type="GO" id="GO:0005524">
    <property type="term" value="F:ATP binding"/>
    <property type="evidence" value="ECO:0007669"/>
    <property type="project" value="InterPro"/>
</dbReference>
<dbReference type="GO" id="GO:0000400">
    <property type="term" value="F:four-way junction DNA binding"/>
    <property type="evidence" value="ECO:0007669"/>
    <property type="project" value="UniProtKB-UniRule"/>
</dbReference>
<dbReference type="GO" id="GO:0009378">
    <property type="term" value="F:four-way junction helicase activity"/>
    <property type="evidence" value="ECO:0007669"/>
    <property type="project" value="InterPro"/>
</dbReference>
<dbReference type="GO" id="GO:0006310">
    <property type="term" value="P:DNA recombination"/>
    <property type="evidence" value="ECO:0007669"/>
    <property type="project" value="UniProtKB-UniRule"/>
</dbReference>
<dbReference type="GO" id="GO:0006281">
    <property type="term" value="P:DNA repair"/>
    <property type="evidence" value="ECO:0007669"/>
    <property type="project" value="UniProtKB-UniRule"/>
</dbReference>
<dbReference type="CDD" id="cd14332">
    <property type="entry name" value="UBA_RuvA_C"/>
    <property type="match status" value="1"/>
</dbReference>
<dbReference type="Gene3D" id="1.10.150.20">
    <property type="entry name" value="5' to 3' exonuclease, C-terminal subdomain"/>
    <property type="match status" value="1"/>
</dbReference>
<dbReference type="Gene3D" id="1.10.8.10">
    <property type="entry name" value="DNA helicase RuvA subunit, C-terminal domain"/>
    <property type="match status" value="1"/>
</dbReference>
<dbReference type="Gene3D" id="2.40.50.140">
    <property type="entry name" value="Nucleic acid-binding proteins"/>
    <property type="match status" value="1"/>
</dbReference>
<dbReference type="HAMAP" id="MF_00031">
    <property type="entry name" value="DNA_HJ_migration_RuvA"/>
    <property type="match status" value="1"/>
</dbReference>
<dbReference type="InterPro" id="IPR013849">
    <property type="entry name" value="DNA_helicase_Holl-junc_RuvA_I"/>
</dbReference>
<dbReference type="InterPro" id="IPR003583">
    <property type="entry name" value="Hlx-hairpin-Hlx_DNA-bd_motif"/>
</dbReference>
<dbReference type="InterPro" id="IPR012340">
    <property type="entry name" value="NA-bd_OB-fold"/>
</dbReference>
<dbReference type="InterPro" id="IPR000085">
    <property type="entry name" value="RuvA"/>
</dbReference>
<dbReference type="InterPro" id="IPR010994">
    <property type="entry name" value="RuvA_2-like"/>
</dbReference>
<dbReference type="InterPro" id="IPR011114">
    <property type="entry name" value="RuvA_C"/>
</dbReference>
<dbReference type="InterPro" id="IPR036267">
    <property type="entry name" value="RuvA_C_sf"/>
</dbReference>
<dbReference type="NCBIfam" id="TIGR00084">
    <property type="entry name" value="ruvA"/>
    <property type="match status" value="1"/>
</dbReference>
<dbReference type="Pfam" id="PF14520">
    <property type="entry name" value="HHH_5"/>
    <property type="match status" value="1"/>
</dbReference>
<dbReference type="Pfam" id="PF07499">
    <property type="entry name" value="RuvA_C"/>
    <property type="match status" value="1"/>
</dbReference>
<dbReference type="Pfam" id="PF01330">
    <property type="entry name" value="RuvA_N"/>
    <property type="match status" value="1"/>
</dbReference>
<dbReference type="SMART" id="SM00278">
    <property type="entry name" value="HhH1"/>
    <property type="match status" value="2"/>
</dbReference>
<dbReference type="SUPFAM" id="SSF46929">
    <property type="entry name" value="DNA helicase RuvA subunit, C-terminal domain"/>
    <property type="match status" value="1"/>
</dbReference>
<dbReference type="SUPFAM" id="SSF50249">
    <property type="entry name" value="Nucleic acid-binding proteins"/>
    <property type="match status" value="1"/>
</dbReference>
<dbReference type="SUPFAM" id="SSF47781">
    <property type="entry name" value="RuvA domain 2-like"/>
    <property type="match status" value="1"/>
</dbReference>
<organism>
    <name type="scientific">Cutibacterium acnes (strain DSM 16379 / KPA171202)</name>
    <name type="common">Propionibacterium acnes</name>
    <dbReference type="NCBI Taxonomy" id="267747"/>
    <lineage>
        <taxon>Bacteria</taxon>
        <taxon>Bacillati</taxon>
        <taxon>Actinomycetota</taxon>
        <taxon>Actinomycetes</taxon>
        <taxon>Propionibacteriales</taxon>
        <taxon>Propionibacteriaceae</taxon>
        <taxon>Cutibacterium</taxon>
    </lineage>
</organism>
<gene>
    <name evidence="1" type="primary">ruvA</name>
    <name type="ordered locus">PPA1159</name>
</gene>
<comment type="function">
    <text evidence="1">The RuvA-RuvB-RuvC complex processes Holliday junction (HJ) DNA during genetic recombination and DNA repair, while the RuvA-RuvB complex plays an important role in the rescue of blocked DNA replication forks via replication fork reversal (RFR). RuvA specifically binds to HJ cruciform DNA, conferring on it an open structure. The RuvB hexamer acts as an ATP-dependent pump, pulling dsDNA into and through the RuvAB complex. HJ branch migration allows RuvC to scan DNA until it finds its consensus sequence, where it cleaves and resolves the cruciform DNA.</text>
</comment>
<comment type="subunit">
    <text evidence="1">Homotetramer. Forms an RuvA(8)-RuvB(12)-Holliday junction (HJ) complex. HJ DNA is sandwiched between 2 RuvA tetramers; dsDNA enters through RuvA and exits via RuvB. An RuvB hexamer assembles on each DNA strand where it exits the tetramer. Each RuvB hexamer is contacted by two RuvA subunits (via domain III) on 2 adjacent RuvB subunits; this complex drives branch migration. In the full resolvosome a probable DNA-RuvA(4)-RuvB(12)-RuvC(2) complex forms which resolves the HJ.</text>
</comment>
<comment type="subcellular location">
    <subcellularLocation>
        <location evidence="1">Cytoplasm</location>
    </subcellularLocation>
</comment>
<comment type="domain">
    <text evidence="1">Has three domains with a flexible linker between the domains II and III and assumes an 'L' shape. Domain III is highly mobile and contacts RuvB.</text>
</comment>
<comment type="similarity">
    <text evidence="1">Belongs to the RuvA family.</text>
</comment>
<name>RUVA_CUTAK</name>
<sequence length="201" mass="20855">MISHFSGTVSAAGPTWVVLDNHGVGIKVLCPPATAASARINQDMSLHTSLVVREESLTLYGFVEADDRDAFELVQTASGVGPKLAAAIMSVLDAAQLATAITEEDDATLCRVPGIGRKGAAKMILELKDKVAALAPRGASASGATHVAAPWREQVAEGLVGLGWSTKDAEKAVDKVVALKEADPAMSIGNLMRAALRSLAR</sequence>